<name>GPPA_SALDC</name>
<keyword id="KW-0378">Hydrolase</keyword>
<protein>
    <recommendedName>
        <fullName evidence="1">Guanosine-5'-triphosphate,3'-diphosphate pyrophosphatase</fullName>
        <ecNumber evidence="1">3.6.1.40</ecNumber>
    </recommendedName>
    <alternativeName>
        <fullName evidence="1">Guanosine pentaphosphate phosphohydrolase</fullName>
    </alternativeName>
    <alternativeName>
        <fullName evidence="1">pppGpp-5'-phosphohydrolase</fullName>
    </alternativeName>
</protein>
<sequence length="493" mass="54832">MNSTSLYAAIDLGSNSFHMLVVREASGSIQTLTRIKRKVRLAAGLNNDNHLSAEAMERGWQCLRLFAERLQDIPQPQIRVVATATLRLAVNAGEFIAKAQTILGCPVQVISGEEEARLIYQGVAHTTGGADQRLVVDIGGASTELVTGTGAQTTSLFSLSMGCVTWLERYFSDRNLAQENFDDAEKAARDVLRPVADELRFHGWKVCVGASGTVQALQEIMMAQGMDERITLAKLQQLKQRAIQCGRLEELEIEGLTLERALVFPSGLAILIAIFTELNIQSMTLAGGALREGLVYGMLHLAVDQDIRSRTLRNIQRRFIVDTDQANRVAKLADNFLKQVENAWHIEPISRELLLSACQLHEIGLSVDFKQAPYHAAYLVRHLDLPGYTPAQKKLLATLLLNQTNPVDLSSLHQQNAVPPRVAEQLCRLLRLAILFAGRRRDDLVPEITLQALNENLTLTLPGDWLAHHPLGKELIDQESQWQSYVHWPLDVR</sequence>
<comment type="function">
    <text evidence="1">Catalyzes the conversion of pppGpp to ppGpp. Guanosine pentaphosphate (pppGpp) is a cytoplasmic signaling molecule which together with ppGpp controls the 'stringent response', an adaptive process that allows bacteria to respond to amino acid starvation, resulting in the coordinated regulation of numerous cellular activities.</text>
</comment>
<comment type="catalytic activity">
    <reaction evidence="1">
        <text>guanosine 3'-diphosphate 5'-triphosphate + H2O = guanosine 3',5'-bis(diphosphate) + phosphate + H(+)</text>
        <dbReference type="Rhea" id="RHEA:13073"/>
        <dbReference type="ChEBI" id="CHEBI:15377"/>
        <dbReference type="ChEBI" id="CHEBI:15378"/>
        <dbReference type="ChEBI" id="CHEBI:43474"/>
        <dbReference type="ChEBI" id="CHEBI:77828"/>
        <dbReference type="ChEBI" id="CHEBI:142410"/>
        <dbReference type="EC" id="3.6.1.40"/>
    </reaction>
</comment>
<comment type="pathway">
    <text evidence="1">Purine metabolism; ppGpp biosynthesis; ppGpp from GTP: step 2/2.</text>
</comment>
<comment type="similarity">
    <text evidence="1">Belongs to the GppA/Ppx family. GppA subfamily.</text>
</comment>
<evidence type="ECO:0000255" key="1">
    <source>
        <dbReference type="HAMAP-Rule" id="MF_01550"/>
    </source>
</evidence>
<proteinExistence type="inferred from homology"/>
<feature type="chain" id="PRO_1000192533" description="Guanosine-5'-triphosphate,3'-diphosphate pyrophosphatase">
    <location>
        <begin position="1"/>
        <end position="493"/>
    </location>
</feature>
<organism>
    <name type="scientific">Salmonella dublin (strain CT_02021853)</name>
    <dbReference type="NCBI Taxonomy" id="439851"/>
    <lineage>
        <taxon>Bacteria</taxon>
        <taxon>Pseudomonadati</taxon>
        <taxon>Pseudomonadota</taxon>
        <taxon>Gammaproteobacteria</taxon>
        <taxon>Enterobacterales</taxon>
        <taxon>Enterobacteriaceae</taxon>
        <taxon>Salmonella</taxon>
    </lineage>
</organism>
<reference key="1">
    <citation type="journal article" date="2011" name="J. Bacteriol.">
        <title>Comparative genomics of 28 Salmonella enterica isolates: evidence for CRISPR-mediated adaptive sublineage evolution.</title>
        <authorList>
            <person name="Fricke W.F."/>
            <person name="Mammel M.K."/>
            <person name="McDermott P.F."/>
            <person name="Tartera C."/>
            <person name="White D.G."/>
            <person name="Leclerc J.E."/>
            <person name="Ravel J."/>
            <person name="Cebula T.A."/>
        </authorList>
    </citation>
    <scope>NUCLEOTIDE SEQUENCE [LARGE SCALE GENOMIC DNA]</scope>
    <source>
        <strain>CT_02021853</strain>
    </source>
</reference>
<dbReference type="EC" id="3.6.1.40" evidence="1"/>
<dbReference type="EMBL" id="CP001144">
    <property type="protein sequence ID" value="ACH76025.1"/>
    <property type="molecule type" value="Genomic_DNA"/>
</dbReference>
<dbReference type="RefSeq" id="WP_001089454.1">
    <property type="nucleotide sequence ID" value="NC_011205.1"/>
</dbReference>
<dbReference type="SMR" id="B5FN73"/>
<dbReference type="KEGG" id="sed:SeD_A4302"/>
<dbReference type="HOGENOM" id="CLU_025908_4_0_6"/>
<dbReference type="UniPathway" id="UPA00908">
    <property type="reaction ID" value="UER00885"/>
</dbReference>
<dbReference type="Proteomes" id="UP000008322">
    <property type="component" value="Chromosome"/>
</dbReference>
<dbReference type="GO" id="GO:0008894">
    <property type="term" value="F:guanosine-5'-triphosphate,3'-diphosphate diphosphatase activity"/>
    <property type="evidence" value="ECO:0007669"/>
    <property type="project" value="UniProtKB-UniRule"/>
</dbReference>
<dbReference type="GO" id="GO:0015974">
    <property type="term" value="P:guanosine pentaphosphate catabolic process"/>
    <property type="evidence" value="ECO:0007669"/>
    <property type="project" value="InterPro"/>
</dbReference>
<dbReference type="GO" id="GO:0015970">
    <property type="term" value="P:guanosine tetraphosphate biosynthetic process"/>
    <property type="evidence" value="ECO:0007669"/>
    <property type="project" value="UniProtKB-UniRule"/>
</dbReference>
<dbReference type="GO" id="GO:0015949">
    <property type="term" value="P:nucleobase-containing small molecule interconversion"/>
    <property type="evidence" value="ECO:0007669"/>
    <property type="project" value="TreeGrafter"/>
</dbReference>
<dbReference type="CDD" id="cd24117">
    <property type="entry name" value="ASKHA_NBD_EcGppA-like"/>
    <property type="match status" value="1"/>
</dbReference>
<dbReference type="FunFam" id="1.10.3210.10:FF:000004">
    <property type="entry name" value="Guanosine-5'-triphosphate,3'-diphosphate pyrophosphatase"/>
    <property type="match status" value="1"/>
</dbReference>
<dbReference type="FunFam" id="3.30.420.150:FF:000001">
    <property type="entry name" value="Guanosine-5'-triphosphate,3'-diphosphate pyrophosphatase"/>
    <property type="match status" value="1"/>
</dbReference>
<dbReference type="FunFam" id="3.30.420.40:FF:000023">
    <property type="entry name" value="Guanosine-5'-triphosphate,3'-diphosphate pyrophosphatase"/>
    <property type="match status" value="1"/>
</dbReference>
<dbReference type="Gene3D" id="3.30.420.40">
    <property type="match status" value="1"/>
</dbReference>
<dbReference type="Gene3D" id="3.30.420.150">
    <property type="entry name" value="Exopolyphosphatase. Domain 2"/>
    <property type="match status" value="1"/>
</dbReference>
<dbReference type="Gene3D" id="1.10.3210.10">
    <property type="entry name" value="Hypothetical protein af1432"/>
    <property type="match status" value="1"/>
</dbReference>
<dbReference type="HAMAP" id="MF_01550">
    <property type="entry name" value="GppA"/>
    <property type="match status" value="1"/>
</dbReference>
<dbReference type="InterPro" id="IPR043129">
    <property type="entry name" value="ATPase_NBD"/>
</dbReference>
<dbReference type="InterPro" id="IPR050273">
    <property type="entry name" value="GppA/Ppx_hydrolase"/>
</dbReference>
<dbReference type="InterPro" id="IPR023709">
    <property type="entry name" value="Guo-5TP_3DP_PyrP"/>
</dbReference>
<dbReference type="InterPro" id="IPR048950">
    <property type="entry name" value="Ppx_GppA_C"/>
</dbReference>
<dbReference type="InterPro" id="IPR003695">
    <property type="entry name" value="Ppx_GppA_N"/>
</dbReference>
<dbReference type="InterPro" id="IPR030673">
    <property type="entry name" value="PyroPPase_GppA_Ppx"/>
</dbReference>
<dbReference type="NCBIfam" id="NF008260">
    <property type="entry name" value="PRK11031.1"/>
    <property type="match status" value="1"/>
</dbReference>
<dbReference type="PANTHER" id="PTHR30005">
    <property type="entry name" value="EXOPOLYPHOSPHATASE"/>
    <property type="match status" value="1"/>
</dbReference>
<dbReference type="PANTHER" id="PTHR30005:SF0">
    <property type="entry name" value="RETROGRADE REGULATION PROTEIN 2"/>
    <property type="match status" value="1"/>
</dbReference>
<dbReference type="Pfam" id="PF02541">
    <property type="entry name" value="Ppx-GppA"/>
    <property type="match status" value="1"/>
</dbReference>
<dbReference type="Pfam" id="PF21447">
    <property type="entry name" value="Ppx-GppA_III"/>
    <property type="match status" value="1"/>
</dbReference>
<dbReference type="PIRSF" id="PIRSF001267">
    <property type="entry name" value="Pyrophosphatase_GppA_Ppx"/>
    <property type="match status" value="1"/>
</dbReference>
<dbReference type="SUPFAM" id="SSF53067">
    <property type="entry name" value="Actin-like ATPase domain"/>
    <property type="match status" value="2"/>
</dbReference>
<dbReference type="SUPFAM" id="SSF109604">
    <property type="entry name" value="HD-domain/PDEase-like"/>
    <property type="match status" value="1"/>
</dbReference>
<accession>B5FN73</accession>
<gene>
    <name evidence="1" type="primary">gppA</name>
    <name type="ordered locus">SeD_A4302</name>
</gene>